<comment type="function">
    <text evidence="1">Required for the processing of the 27S pre-rRNA.</text>
</comment>
<comment type="interaction">
    <interactant intactId="EBI-2412471">
        <id>Q09958</id>
    </interactant>
    <interactant intactId="EBI-3843983">
        <id>Q11184</id>
        <label>let-756</label>
    </interactant>
    <organismsDiffer>false</organismsDiffer>
    <experiments>2</experiments>
</comment>
<comment type="subcellular location">
    <subcellularLocation>
        <location evidence="1">Nucleus</location>
        <location evidence="1">Nucleolus</location>
    </subcellularLocation>
</comment>
<comment type="similarity">
    <text evidence="4">Belongs to the EBP2 family.</text>
</comment>
<accession>Q09958</accession>
<reference key="1">
    <citation type="journal article" date="1998" name="Science">
        <title>Genome sequence of the nematode C. elegans: a platform for investigating biology.</title>
        <authorList>
            <consortium name="The C. elegans sequencing consortium"/>
        </authorList>
    </citation>
    <scope>NUCLEOTIDE SEQUENCE [LARGE SCALE GENOMIC DNA]</scope>
    <source>
        <strain>Bristol N2</strain>
    </source>
</reference>
<organism>
    <name type="scientific">Caenorhabditis elegans</name>
    <dbReference type="NCBI Taxonomy" id="6239"/>
    <lineage>
        <taxon>Eukaryota</taxon>
        <taxon>Metazoa</taxon>
        <taxon>Ecdysozoa</taxon>
        <taxon>Nematoda</taxon>
        <taxon>Chromadorea</taxon>
        <taxon>Rhabditida</taxon>
        <taxon>Rhabditina</taxon>
        <taxon>Rhabditomorpha</taxon>
        <taxon>Rhabditoidea</taxon>
        <taxon>Rhabditidae</taxon>
        <taxon>Peloderinae</taxon>
        <taxon>Caenorhabditis</taxon>
    </lineage>
</organism>
<protein>
    <recommendedName>
        <fullName>Probable rRNA-processing protein EBP2 homolog</fullName>
    </recommendedName>
</protein>
<name>EBP2_CAEEL</name>
<dbReference type="EMBL" id="FO080599">
    <property type="protein sequence ID" value="CCD65011.1"/>
    <property type="molecule type" value="Genomic_DNA"/>
</dbReference>
<dbReference type="PIR" id="T15543">
    <property type="entry name" value="T15543"/>
</dbReference>
<dbReference type="RefSeq" id="NP_495125.1">
    <property type="nucleotide sequence ID" value="NM_062724.8"/>
</dbReference>
<dbReference type="SMR" id="Q09958"/>
<dbReference type="BioGRID" id="39310">
    <property type="interactions" value="17"/>
</dbReference>
<dbReference type="FunCoup" id="Q09958">
    <property type="interactions" value="2344"/>
</dbReference>
<dbReference type="IntAct" id="Q09958">
    <property type="interactions" value="2"/>
</dbReference>
<dbReference type="STRING" id="6239.C18A3.3.1"/>
<dbReference type="PaxDb" id="6239-C18A3.3"/>
<dbReference type="PeptideAtlas" id="Q09958"/>
<dbReference type="EnsemblMetazoa" id="C18A3.3.1">
    <property type="protein sequence ID" value="C18A3.3.1"/>
    <property type="gene ID" value="WBGene00015941"/>
</dbReference>
<dbReference type="GeneID" id="173968"/>
<dbReference type="KEGG" id="cel:CELE_C18A3.3"/>
<dbReference type="UCSC" id="C18A3.3">
    <property type="organism name" value="c. elegans"/>
</dbReference>
<dbReference type="AGR" id="WB:WBGene00015941"/>
<dbReference type="CTD" id="173968"/>
<dbReference type="WormBase" id="C18A3.3">
    <property type="protein sequence ID" value="CE28890"/>
    <property type="gene ID" value="WBGene00015941"/>
</dbReference>
<dbReference type="eggNOG" id="KOG3080">
    <property type="taxonomic scope" value="Eukaryota"/>
</dbReference>
<dbReference type="GeneTree" id="ENSGT00390000014984"/>
<dbReference type="HOGENOM" id="CLU_036007_1_0_1"/>
<dbReference type="InParanoid" id="Q09958"/>
<dbReference type="OMA" id="RETMFHR"/>
<dbReference type="OrthoDB" id="443772at2759"/>
<dbReference type="PhylomeDB" id="Q09958"/>
<dbReference type="Reactome" id="R-CEL-6791226">
    <property type="pathway name" value="Major pathway of rRNA processing in the nucleolus and cytosol"/>
</dbReference>
<dbReference type="PRO" id="PR:Q09958"/>
<dbReference type="Proteomes" id="UP000001940">
    <property type="component" value="Chromosome II"/>
</dbReference>
<dbReference type="Bgee" id="WBGene00015941">
    <property type="expression patterns" value="Expressed in adult organism and 4 other cell types or tissues"/>
</dbReference>
<dbReference type="GO" id="GO:0034399">
    <property type="term" value="C:nuclear periphery"/>
    <property type="evidence" value="ECO:0000318"/>
    <property type="project" value="GO_Central"/>
</dbReference>
<dbReference type="GO" id="GO:0005730">
    <property type="term" value="C:nucleolus"/>
    <property type="evidence" value="ECO:0000318"/>
    <property type="project" value="GO_Central"/>
</dbReference>
<dbReference type="GO" id="GO:0030687">
    <property type="term" value="C:preribosome, large subunit precursor"/>
    <property type="evidence" value="ECO:0000318"/>
    <property type="project" value="GO_Central"/>
</dbReference>
<dbReference type="GO" id="GO:0042273">
    <property type="term" value="P:ribosomal large subunit biogenesis"/>
    <property type="evidence" value="ECO:0000318"/>
    <property type="project" value="GO_Central"/>
</dbReference>
<dbReference type="GO" id="GO:0006364">
    <property type="term" value="P:rRNA processing"/>
    <property type="evidence" value="ECO:0000318"/>
    <property type="project" value="GO_Central"/>
</dbReference>
<dbReference type="InterPro" id="IPR008610">
    <property type="entry name" value="Ebp2"/>
</dbReference>
<dbReference type="PANTHER" id="PTHR13028">
    <property type="entry name" value="RRNA PROCESSING PROTEIN EBNA1-BINDING PROTEIN-RELATED"/>
    <property type="match status" value="1"/>
</dbReference>
<dbReference type="PANTHER" id="PTHR13028:SF0">
    <property type="entry name" value="RRNA-PROCESSING PROTEIN EBP2-RELATED"/>
    <property type="match status" value="1"/>
</dbReference>
<dbReference type="Pfam" id="PF05890">
    <property type="entry name" value="Ebp2"/>
    <property type="match status" value="1"/>
</dbReference>
<evidence type="ECO:0000250" key="1"/>
<evidence type="ECO:0000255" key="2"/>
<evidence type="ECO:0000256" key="3">
    <source>
        <dbReference type="SAM" id="MobiDB-lite"/>
    </source>
</evidence>
<evidence type="ECO:0000305" key="4"/>
<feature type="chain" id="PRO_0000119996" description="Probable rRNA-processing protein EBP2 homolog">
    <location>
        <begin position="1"/>
        <end position="340"/>
    </location>
</feature>
<feature type="region of interest" description="Disordered" evidence="3">
    <location>
        <begin position="1"/>
        <end position="59"/>
    </location>
</feature>
<feature type="region of interest" description="Disordered" evidence="3">
    <location>
        <begin position="245"/>
        <end position="340"/>
    </location>
</feature>
<feature type="coiled-coil region" evidence="2">
    <location>
        <begin position="206"/>
        <end position="245"/>
    </location>
</feature>
<feature type="compositionally biased region" description="Basic residues" evidence="3">
    <location>
        <begin position="1"/>
        <end position="10"/>
    </location>
</feature>
<feature type="compositionally biased region" description="Acidic residues" evidence="3">
    <location>
        <begin position="23"/>
        <end position="37"/>
    </location>
</feature>
<feature type="compositionally biased region" description="Acidic residues" evidence="3">
    <location>
        <begin position="46"/>
        <end position="59"/>
    </location>
</feature>
<feature type="compositionally biased region" description="Gly residues" evidence="3">
    <location>
        <begin position="264"/>
        <end position="277"/>
    </location>
</feature>
<feature type="compositionally biased region" description="Gly residues" evidence="3">
    <location>
        <begin position="318"/>
        <end position="333"/>
    </location>
</feature>
<keyword id="KW-0175">Coiled coil</keyword>
<keyword id="KW-0539">Nucleus</keyword>
<keyword id="KW-1185">Reference proteome</keyword>
<keyword id="KW-0690">Ribosome biogenesis</keyword>
<sequence length="340" mass="38083">MVRKMNKLAKRLASTSKSRQPEPESDSDGSEFDFDNAIEEKPMEAMDIEEVESDGDDDERELQAAFAAGLLKDGLNIQVAKKRPIINKSAEMKEKLAEITKDLPWVETLEVVTPHSEMDKKVENDDFQRELNFYKQAEKAVQIAYPRLLNLGIKVLRPTDYYAEMAKSDTHMQKVRKRLLGIQEMKERQEAFRRIREEKKFAVKVQKEVLAAKNTEKKNLAEAVKKHKKGMKQQLEDMLNNVKRHGLDQDDDAPTGAFGDRLGGRGGAGRGGAGRGGSMRNAGELKRKLKSDKFGYGGKKKGMKRNNKESFNDLFGAPRGGFGGRGRGGGRGGRGGRGRR</sequence>
<proteinExistence type="evidence at protein level"/>
<gene>
    <name type="ORF">C18A3.3</name>
</gene>